<name>SYE_ANASK</name>
<accession>B4UI79</accession>
<evidence type="ECO:0000255" key="1">
    <source>
        <dbReference type="HAMAP-Rule" id="MF_00022"/>
    </source>
</evidence>
<gene>
    <name evidence="1" type="primary">gltX</name>
    <name type="ordered locus">AnaeK_1251</name>
</gene>
<proteinExistence type="inferred from homology"/>
<comment type="function">
    <text evidence="1">Catalyzes the attachment of glutamate to tRNA(Glu) in a two-step reaction: glutamate is first activated by ATP to form Glu-AMP and then transferred to the acceptor end of tRNA(Glu).</text>
</comment>
<comment type="catalytic activity">
    <reaction evidence="1">
        <text>tRNA(Glu) + L-glutamate + ATP = L-glutamyl-tRNA(Glu) + AMP + diphosphate</text>
        <dbReference type="Rhea" id="RHEA:23540"/>
        <dbReference type="Rhea" id="RHEA-COMP:9663"/>
        <dbReference type="Rhea" id="RHEA-COMP:9680"/>
        <dbReference type="ChEBI" id="CHEBI:29985"/>
        <dbReference type="ChEBI" id="CHEBI:30616"/>
        <dbReference type="ChEBI" id="CHEBI:33019"/>
        <dbReference type="ChEBI" id="CHEBI:78442"/>
        <dbReference type="ChEBI" id="CHEBI:78520"/>
        <dbReference type="ChEBI" id="CHEBI:456215"/>
        <dbReference type="EC" id="6.1.1.17"/>
    </reaction>
</comment>
<comment type="cofactor">
    <cofactor evidence="1">
        <name>Zn(2+)</name>
        <dbReference type="ChEBI" id="CHEBI:29105"/>
    </cofactor>
    <text evidence="1">Binds 1 zinc ion per subunit.</text>
</comment>
<comment type="subunit">
    <text evidence="1">Monomer.</text>
</comment>
<comment type="subcellular location">
    <subcellularLocation>
        <location evidence="1">Cytoplasm</location>
    </subcellularLocation>
</comment>
<comment type="similarity">
    <text evidence="1">Belongs to the class-I aminoacyl-tRNA synthetase family. Glutamate--tRNA ligase type 1 subfamily.</text>
</comment>
<keyword id="KW-0030">Aminoacyl-tRNA synthetase</keyword>
<keyword id="KW-0067">ATP-binding</keyword>
<keyword id="KW-0963">Cytoplasm</keyword>
<keyword id="KW-0436">Ligase</keyword>
<keyword id="KW-0479">Metal-binding</keyword>
<keyword id="KW-0547">Nucleotide-binding</keyword>
<keyword id="KW-0648">Protein biosynthesis</keyword>
<keyword id="KW-0862">Zinc</keyword>
<protein>
    <recommendedName>
        <fullName evidence="1">Glutamate--tRNA ligase</fullName>
        <ecNumber evidence="1">6.1.1.17</ecNumber>
    </recommendedName>
    <alternativeName>
        <fullName evidence="1">Glutamyl-tRNA synthetase</fullName>
        <shortName evidence="1">GluRS</shortName>
    </alternativeName>
</protein>
<organism>
    <name type="scientific">Anaeromyxobacter sp. (strain K)</name>
    <dbReference type="NCBI Taxonomy" id="447217"/>
    <lineage>
        <taxon>Bacteria</taxon>
        <taxon>Pseudomonadati</taxon>
        <taxon>Myxococcota</taxon>
        <taxon>Myxococcia</taxon>
        <taxon>Myxococcales</taxon>
        <taxon>Cystobacterineae</taxon>
        <taxon>Anaeromyxobacteraceae</taxon>
        <taxon>Anaeromyxobacter</taxon>
    </lineage>
</organism>
<reference key="1">
    <citation type="submission" date="2008-08" db="EMBL/GenBank/DDBJ databases">
        <title>Complete sequence of Anaeromyxobacter sp. K.</title>
        <authorList>
            <consortium name="US DOE Joint Genome Institute"/>
            <person name="Lucas S."/>
            <person name="Copeland A."/>
            <person name="Lapidus A."/>
            <person name="Glavina del Rio T."/>
            <person name="Dalin E."/>
            <person name="Tice H."/>
            <person name="Bruce D."/>
            <person name="Goodwin L."/>
            <person name="Pitluck S."/>
            <person name="Saunders E."/>
            <person name="Brettin T."/>
            <person name="Detter J.C."/>
            <person name="Han C."/>
            <person name="Larimer F."/>
            <person name="Land M."/>
            <person name="Hauser L."/>
            <person name="Kyrpides N."/>
            <person name="Ovchinnikiva G."/>
            <person name="Beliaev A."/>
        </authorList>
    </citation>
    <scope>NUCLEOTIDE SEQUENCE [LARGE SCALE GENOMIC DNA]</scope>
    <source>
        <strain>K</strain>
    </source>
</reference>
<feature type="chain" id="PRO_1000090052" description="Glutamate--tRNA ligase">
    <location>
        <begin position="1"/>
        <end position="474"/>
    </location>
</feature>
<feature type="short sequence motif" description="'HIGH' region" evidence="1">
    <location>
        <begin position="10"/>
        <end position="20"/>
    </location>
</feature>
<feature type="short sequence motif" description="'KMSKS' region" evidence="1">
    <location>
        <begin position="244"/>
        <end position="248"/>
    </location>
</feature>
<feature type="binding site" evidence="1">
    <location>
        <position position="107"/>
    </location>
    <ligand>
        <name>Zn(2+)</name>
        <dbReference type="ChEBI" id="CHEBI:29105"/>
    </ligand>
</feature>
<feature type="binding site" evidence="1">
    <location>
        <position position="109"/>
    </location>
    <ligand>
        <name>Zn(2+)</name>
        <dbReference type="ChEBI" id="CHEBI:29105"/>
    </ligand>
</feature>
<feature type="binding site" evidence="1">
    <location>
        <position position="134"/>
    </location>
    <ligand>
        <name>Zn(2+)</name>
        <dbReference type="ChEBI" id="CHEBI:29105"/>
    </ligand>
</feature>
<feature type="binding site" evidence="1">
    <location>
        <position position="136"/>
    </location>
    <ligand>
        <name>Zn(2+)</name>
        <dbReference type="ChEBI" id="CHEBI:29105"/>
    </ligand>
</feature>
<feature type="binding site" evidence="1">
    <location>
        <position position="247"/>
    </location>
    <ligand>
        <name>ATP</name>
        <dbReference type="ChEBI" id="CHEBI:30616"/>
    </ligand>
</feature>
<dbReference type="EC" id="6.1.1.17" evidence="1"/>
<dbReference type="EMBL" id="CP001131">
    <property type="protein sequence ID" value="ACG72484.1"/>
    <property type="molecule type" value="Genomic_DNA"/>
</dbReference>
<dbReference type="RefSeq" id="WP_012525308.1">
    <property type="nucleotide sequence ID" value="NC_011145.1"/>
</dbReference>
<dbReference type="SMR" id="B4UI79"/>
<dbReference type="KEGG" id="ank:AnaeK_1251"/>
<dbReference type="HOGENOM" id="CLU_015768_6_3_7"/>
<dbReference type="OrthoDB" id="9807503at2"/>
<dbReference type="Proteomes" id="UP000001871">
    <property type="component" value="Chromosome"/>
</dbReference>
<dbReference type="GO" id="GO:0005829">
    <property type="term" value="C:cytosol"/>
    <property type="evidence" value="ECO:0007669"/>
    <property type="project" value="TreeGrafter"/>
</dbReference>
<dbReference type="GO" id="GO:0005524">
    <property type="term" value="F:ATP binding"/>
    <property type="evidence" value="ECO:0007669"/>
    <property type="project" value="UniProtKB-UniRule"/>
</dbReference>
<dbReference type="GO" id="GO:0004818">
    <property type="term" value="F:glutamate-tRNA ligase activity"/>
    <property type="evidence" value="ECO:0007669"/>
    <property type="project" value="UniProtKB-UniRule"/>
</dbReference>
<dbReference type="GO" id="GO:0000049">
    <property type="term" value="F:tRNA binding"/>
    <property type="evidence" value="ECO:0007669"/>
    <property type="project" value="InterPro"/>
</dbReference>
<dbReference type="GO" id="GO:0008270">
    <property type="term" value="F:zinc ion binding"/>
    <property type="evidence" value="ECO:0007669"/>
    <property type="project" value="UniProtKB-UniRule"/>
</dbReference>
<dbReference type="GO" id="GO:0006424">
    <property type="term" value="P:glutamyl-tRNA aminoacylation"/>
    <property type="evidence" value="ECO:0007669"/>
    <property type="project" value="UniProtKB-UniRule"/>
</dbReference>
<dbReference type="CDD" id="cd00808">
    <property type="entry name" value="GluRS_core"/>
    <property type="match status" value="1"/>
</dbReference>
<dbReference type="FunFam" id="3.40.50.620:FF:000007">
    <property type="entry name" value="Glutamate--tRNA ligase"/>
    <property type="match status" value="1"/>
</dbReference>
<dbReference type="Gene3D" id="1.10.10.350">
    <property type="match status" value="1"/>
</dbReference>
<dbReference type="Gene3D" id="1.10.8.70">
    <property type="entry name" value="Glutamate-tRNA synthetase, class I, anticodon-binding domain 1"/>
    <property type="match status" value="1"/>
</dbReference>
<dbReference type="Gene3D" id="3.40.50.620">
    <property type="entry name" value="HUPs"/>
    <property type="match status" value="1"/>
</dbReference>
<dbReference type="HAMAP" id="MF_00022">
    <property type="entry name" value="Glu_tRNA_synth_type1"/>
    <property type="match status" value="1"/>
</dbReference>
<dbReference type="InterPro" id="IPR045462">
    <property type="entry name" value="aa-tRNA-synth_I_cd-bd"/>
</dbReference>
<dbReference type="InterPro" id="IPR020751">
    <property type="entry name" value="aa-tRNA-synth_I_codon-bd_sub2"/>
</dbReference>
<dbReference type="InterPro" id="IPR001412">
    <property type="entry name" value="aa-tRNA-synth_I_CS"/>
</dbReference>
<dbReference type="InterPro" id="IPR008925">
    <property type="entry name" value="aa_tRNA-synth_I_cd-bd_sf"/>
</dbReference>
<dbReference type="InterPro" id="IPR004527">
    <property type="entry name" value="Glu-tRNA-ligase_bac/mito"/>
</dbReference>
<dbReference type="InterPro" id="IPR020752">
    <property type="entry name" value="Glu-tRNA-synth_I_codon-bd_sub1"/>
</dbReference>
<dbReference type="InterPro" id="IPR000924">
    <property type="entry name" value="Glu/Gln-tRNA-synth"/>
</dbReference>
<dbReference type="InterPro" id="IPR020058">
    <property type="entry name" value="Glu/Gln-tRNA-synth_Ib_cat-dom"/>
</dbReference>
<dbReference type="InterPro" id="IPR049940">
    <property type="entry name" value="GluQ/Sye"/>
</dbReference>
<dbReference type="InterPro" id="IPR033910">
    <property type="entry name" value="GluRS_core"/>
</dbReference>
<dbReference type="InterPro" id="IPR014729">
    <property type="entry name" value="Rossmann-like_a/b/a_fold"/>
</dbReference>
<dbReference type="NCBIfam" id="TIGR00464">
    <property type="entry name" value="gltX_bact"/>
    <property type="match status" value="1"/>
</dbReference>
<dbReference type="PANTHER" id="PTHR43311">
    <property type="entry name" value="GLUTAMATE--TRNA LIGASE"/>
    <property type="match status" value="1"/>
</dbReference>
<dbReference type="PANTHER" id="PTHR43311:SF2">
    <property type="entry name" value="GLUTAMATE--TRNA LIGASE, MITOCHONDRIAL-RELATED"/>
    <property type="match status" value="1"/>
</dbReference>
<dbReference type="Pfam" id="PF19269">
    <property type="entry name" value="Anticodon_2"/>
    <property type="match status" value="1"/>
</dbReference>
<dbReference type="Pfam" id="PF00749">
    <property type="entry name" value="tRNA-synt_1c"/>
    <property type="match status" value="1"/>
</dbReference>
<dbReference type="PRINTS" id="PR00987">
    <property type="entry name" value="TRNASYNTHGLU"/>
</dbReference>
<dbReference type="SUPFAM" id="SSF48163">
    <property type="entry name" value="An anticodon-binding domain of class I aminoacyl-tRNA synthetases"/>
    <property type="match status" value="1"/>
</dbReference>
<dbReference type="SUPFAM" id="SSF52374">
    <property type="entry name" value="Nucleotidylyl transferase"/>
    <property type="match status" value="1"/>
</dbReference>
<dbReference type="PROSITE" id="PS00178">
    <property type="entry name" value="AA_TRNA_LIGASE_I"/>
    <property type="match status" value="1"/>
</dbReference>
<sequence>MDKPRVRFAPSPTGYLHIGGARTALFNWLWARRNGGTFVLRIEDTDRERSTQLAVDAILDGLRWLGLDWDEGPGVGGPHPPYFQTERLDLYKAHAERLIREGKAYACYCTREELDAQRKQAEAEKRQFRYPGTCRDKPYDPSRPHVVRFRVPDAGATSWNDLVKGVISTPHDTLQDEVILRGDGVPLYNFGAVVDDITMEINLVGRGDDHVNNTARQILMYEALGYPVPTFAHFPMILGADKARLSKRHGATSVTAYRDMGFLPEAVVNYLVRLGWSHGDQELFTLDELVRYFDLKDVGATAGVFNPEKMAWVNHEWLKRRSPEELAKLALPHFRAAGLPAEDDEKLRHVCAVARERAKTLGEYVQQFRYFYAPIALDPKAKAKFLTADTRPVLQAVRDAIAALPALETQAVEQVFHGEAERRGVGLGKVAQPVRVALTGGTASPGMYDVVQILGKDETLKRLDEALRIAGEPG</sequence>